<organism>
    <name type="scientific">Shigella flexneri</name>
    <dbReference type="NCBI Taxonomy" id="623"/>
    <lineage>
        <taxon>Bacteria</taxon>
        <taxon>Pseudomonadati</taxon>
        <taxon>Pseudomonadota</taxon>
        <taxon>Gammaproteobacteria</taxon>
        <taxon>Enterobacterales</taxon>
        <taxon>Enterobacteriaceae</taxon>
        <taxon>Shigella</taxon>
    </lineage>
</organism>
<keyword id="KW-0028">Amino-acid biosynthesis</keyword>
<keyword id="KW-0997">Cell inner membrane</keyword>
<keyword id="KW-1003">Cell membrane</keyword>
<keyword id="KW-0198">Cysteine biosynthesis</keyword>
<keyword id="KW-0472">Membrane</keyword>
<keyword id="KW-1185">Reference proteome</keyword>
<keyword id="KW-0764">Sulfate transport</keyword>
<keyword id="KW-0812">Transmembrane</keyword>
<keyword id="KW-1133">Transmembrane helix</keyword>
<keyword id="KW-0813">Transport</keyword>
<evidence type="ECO:0000255" key="1">
    <source>
        <dbReference type="HAMAP-Rule" id="MF_00468"/>
    </source>
</evidence>
<evidence type="ECO:0000305" key="2"/>
<comment type="function">
    <text evidence="1">High affinity, high specificity proton-dependent sulfate transporter, which mediates sulfate uptake. Provides the sulfur source for the cysteine synthesis pathway.</text>
</comment>
<comment type="subcellular location">
    <subcellularLocation>
        <location evidence="1">Cell inner membrane</location>
        <topology evidence="1">Multi-pass membrane protein</topology>
    </subcellularLocation>
</comment>
<comment type="similarity">
    <text evidence="1">Belongs to the CysZ family.</text>
</comment>
<accession>Q83QN8</accession>
<gene>
    <name evidence="1" type="primary">cysZ</name>
    <name type="ordered locus">SF2468</name>
    <name type="ordered locus">S2614</name>
</gene>
<sequence>MVSSFTSAPRSGFYYFAQGWKLVSQPGIRRFVILPLLVNILLMGGAFWWLFTQLDVWIPTFMSYVPDWLQWLSYLLWPLAVISVLLVFGYFFSTIANWIAAPFNGLLAEQLEARLTGATPPDTGIFGIMKDVPRIMKREWQKFVWYLPRAIVLLILYFIPGIGQTVAPVLWFLFSAWMLAIQYCDYPFDTHKVPFKEMRTALRTRKITNMQFGALTSLFTMIPLLNLFIMPVAVCGATAMWVDCYRDKHAMWR</sequence>
<reference key="1">
    <citation type="journal article" date="2002" name="Nucleic Acids Res.">
        <title>Genome sequence of Shigella flexneri 2a: insights into pathogenicity through comparison with genomes of Escherichia coli K12 and O157.</title>
        <authorList>
            <person name="Jin Q."/>
            <person name="Yuan Z."/>
            <person name="Xu J."/>
            <person name="Wang Y."/>
            <person name="Shen Y."/>
            <person name="Lu W."/>
            <person name="Wang J."/>
            <person name="Liu H."/>
            <person name="Yang J."/>
            <person name="Yang F."/>
            <person name="Zhang X."/>
            <person name="Zhang J."/>
            <person name="Yang G."/>
            <person name="Wu H."/>
            <person name="Qu D."/>
            <person name="Dong J."/>
            <person name="Sun L."/>
            <person name="Xue Y."/>
            <person name="Zhao A."/>
            <person name="Gao Y."/>
            <person name="Zhu J."/>
            <person name="Kan B."/>
            <person name="Ding K."/>
            <person name="Chen S."/>
            <person name="Cheng H."/>
            <person name="Yao Z."/>
            <person name="He B."/>
            <person name="Chen R."/>
            <person name="Ma D."/>
            <person name="Qiang B."/>
            <person name="Wen Y."/>
            <person name="Hou Y."/>
            <person name="Yu J."/>
        </authorList>
    </citation>
    <scope>NUCLEOTIDE SEQUENCE [LARGE SCALE GENOMIC DNA]</scope>
    <source>
        <strain>301 / Serotype 2a</strain>
    </source>
</reference>
<reference key="2">
    <citation type="journal article" date="2003" name="Infect. Immun.">
        <title>Complete genome sequence and comparative genomics of Shigella flexneri serotype 2a strain 2457T.</title>
        <authorList>
            <person name="Wei J."/>
            <person name="Goldberg M.B."/>
            <person name="Burland V."/>
            <person name="Venkatesan M.M."/>
            <person name="Deng W."/>
            <person name="Fournier G."/>
            <person name="Mayhew G.F."/>
            <person name="Plunkett G. III"/>
            <person name="Rose D.J."/>
            <person name="Darling A."/>
            <person name="Mau B."/>
            <person name="Perna N.T."/>
            <person name="Payne S.M."/>
            <person name="Runyen-Janecky L.J."/>
            <person name="Zhou S."/>
            <person name="Schwartz D.C."/>
            <person name="Blattner F.R."/>
        </authorList>
    </citation>
    <scope>NUCLEOTIDE SEQUENCE [LARGE SCALE GENOMIC DNA]</scope>
    <source>
        <strain>ATCC 700930 / 2457T / Serotype 2a</strain>
    </source>
</reference>
<proteinExistence type="inferred from homology"/>
<protein>
    <recommendedName>
        <fullName evidence="1">Sulfate transporter CysZ</fullName>
    </recommendedName>
</protein>
<name>CYSZ_SHIFL</name>
<feature type="chain" id="PRO_0000204350" description="Sulfate transporter CysZ">
    <location>
        <begin position="1"/>
        <end position="253"/>
    </location>
</feature>
<feature type="transmembrane region" description="Helical" evidence="1">
    <location>
        <begin position="31"/>
        <end position="51"/>
    </location>
</feature>
<feature type="transmembrane region" description="Helical" evidence="1">
    <location>
        <begin position="75"/>
        <end position="95"/>
    </location>
</feature>
<feature type="transmembrane region" description="Helical" evidence="1">
    <location>
        <begin position="151"/>
        <end position="171"/>
    </location>
</feature>
<feature type="transmembrane region" description="Helical" evidence="1">
    <location>
        <begin position="222"/>
        <end position="242"/>
    </location>
</feature>
<feature type="sequence conflict" description="In Ref. 2; AAP17788." evidence="2" ref="2">
    <original>T</original>
    <variation>N</variation>
    <location>
        <position position="190"/>
    </location>
</feature>
<dbReference type="EMBL" id="AE005674">
    <property type="protein sequence ID" value="AAN43975.1"/>
    <property type="molecule type" value="Genomic_DNA"/>
</dbReference>
<dbReference type="EMBL" id="AE014073">
    <property type="protein sequence ID" value="AAP17788.1"/>
    <property type="molecule type" value="Genomic_DNA"/>
</dbReference>
<dbReference type="RefSeq" id="NP_708268.1">
    <property type="nucleotide sequence ID" value="NC_004337.2"/>
</dbReference>
<dbReference type="RefSeq" id="WP_000254831.1">
    <property type="nucleotide sequence ID" value="NZ_CP123365.1"/>
</dbReference>
<dbReference type="SMR" id="Q83QN8"/>
<dbReference type="STRING" id="198214.SF2468"/>
<dbReference type="PaxDb" id="198214-SF2468"/>
<dbReference type="GeneID" id="1027218"/>
<dbReference type="KEGG" id="sfl:SF2468"/>
<dbReference type="KEGG" id="sfx:S2614"/>
<dbReference type="PATRIC" id="fig|198214.7.peg.2949"/>
<dbReference type="HOGENOM" id="CLU_070331_1_0_6"/>
<dbReference type="Proteomes" id="UP000001006">
    <property type="component" value="Chromosome"/>
</dbReference>
<dbReference type="Proteomes" id="UP000002673">
    <property type="component" value="Chromosome"/>
</dbReference>
<dbReference type="GO" id="GO:0005886">
    <property type="term" value="C:plasma membrane"/>
    <property type="evidence" value="ECO:0007669"/>
    <property type="project" value="UniProtKB-SubCell"/>
</dbReference>
<dbReference type="GO" id="GO:0009675">
    <property type="term" value="F:high-affinity sulfate:proton symporter activity"/>
    <property type="evidence" value="ECO:0007669"/>
    <property type="project" value="TreeGrafter"/>
</dbReference>
<dbReference type="GO" id="GO:0019344">
    <property type="term" value="P:cysteine biosynthetic process"/>
    <property type="evidence" value="ECO:0007669"/>
    <property type="project" value="UniProtKB-UniRule"/>
</dbReference>
<dbReference type="GO" id="GO:0000103">
    <property type="term" value="P:sulfate assimilation"/>
    <property type="evidence" value="ECO:0007669"/>
    <property type="project" value="InterPro"/>
</dbReference>
<dbReference type="HAMAP" id="MF_00468">
    <property type="entry name" value="CysZ"/>
    <property type="match status" value="1"/>
</dbReference>
<dbReference type="InterPro" id="IPR050480">
    <property type="entry name" value="CysZ_sulfate_transptr"/>
</dbReference>
<dbReference type="InterPro" id="IPR022985">
    <property type="entry name" value="Sulfate_CysZ"/>
</dbReference>
<dbReference type="NCBIfam" id="NF003433">
    <property type="entry name" value="PRK04949.1"/>
    <property type="match status" value="1"/>
</dbReference>
<dbReference type="PANTHER" id="PTHR37468">
    <property type="entry name" value="SULFATE TRANSPORTER CYSZ"/>
    <property type="match status" value="1"/>
</dbReference>
<dbReference type="PANTHER" id="PTHR37468:SF1">
    <property type="entry name" value="SULFATE TRANSPORTER CYSZ"/>
    <property type="match status" value="1"/>
</dbReference>
<dbReference type="Pfam" id="PF07264">
    <property type="entry name" value="EI24"/>
    <property type="match status" value="1"/>
</dbReference>